<protein>
    <recommendedName>
        <fullName>DNA mismatch repair protein MutS</fullName>
    </recommendedName>
</protein>
<evidence type="ECO:0000250" key="1"/>
<evidence type="ECO:0000255" key="2"/>
<evidence type="ECO:0000305" key="3"/>
<proteinExistence type="inferred from homology"/>
<reference key="1">
    <citation type="journal article" date="1995" name="Science">
        <title>Whole-genome random sequencing and assembly of Haemophilus influenzae Rd.</title>
        <authorList>
            <person name="Fleischmann R.D."/>
            <person name="Adams M.D."/>
            <person name="White O."/>
            <person name="Clayton R.A."/>
            <person name="Kirkness E.F."/>
            <person name="Kerlavage A.R."/>
            <person name="Bult C.J."/>
            <person name="Tomb J.-F."/>
            <person name="Dougherty B.A."/>
            <person name="Merrick J.M."/>
            <person name="McKenney K."/>
            <person name="Sutton G.G."/>
            <person name="FitzHugh W."/>
            <person name="Fields C.A."/>
            <person name="Gocayne J.D."/>
            <person name="Scott J.D."/>
            <person name="Shirley R."/>
            <person name="Liu L.-I."/>
            <person name="Glodek A."/>
            <person name="Kelley J.M."/>
            <person name="Weidman J.F."/>
            <person name="Phillips C.A."/>
            <person name="Spriggs T."/>
            <person name="Hedblom E."/>
            <person name="Cotton M.D."/>
            <person name="Utterback T.R."/>
            <person name="Hanna M.C."/>
            <person name="Nguyen D.T."/>
            <person name="Saudek D.M."/>
            <person name="Brandon R.C."/>
            <person name="Fine L.D."/>
            <person name="Fritchman J.L."/>
            <person name="Fuhrmann J.L."/>
            <person name="Geoghagen N.S.M."/>
            <person name="Gnehm C.L."/>
            <person name="McDonald L.A."/>
            <person name="Small K.V."/>
            <person name="Fraser C.M."/>
            <person name="Smith H.O."/>
            <person name="Venter J.C."/>
        </authorList>
    </citation>
    <scope>NUCLEOTIDE SEQUENCE [LARGE SCALE GENOMIC DNA]</scope>
    <source>
        <strain>ATCC 51907 / DSM 11121 / KW20 / Rd</strain>
    </source>
</reference>
<reference key="2">
    <citation type="journal article" date="1998" name="J. Bacteriol.">
        <title>The tryptophanase gene cluster of Haemophilus influenzae type b: evidence for horizontal gene transfer.</title>
        <authorList>
            <person name="Martin K."/>
            <person name="Morlin G."/>
            <person name="Smith A."/>
            <person name="Nordyke A."/>
            <person name="Eisenstark A."/>
            <person name="Golomb M."/>
        </authorList>
    </citation>
    <scope>NUCLEOTIDE SEQUENCE [GENOMIC DNA] OF 1-62</scope>
    <source>
        <strain>Eagan / Serotype B</strain>
    </source>
</reference>
<organism>
    <name type="scientific">Haemophilus influenzae (strain ATCC 51907 / DSM 11121 / KW20 / Rd)</name>
    <dbReference type="NCBI Taxonomy" id="71421"/>
    <lineage>
        <taxon>Bacteria</taxon>
        <taxon>Pseudomonadati</taxon>
        <taxon>Pseudomonadota</taxon>
        <taxon>Gammaproteobacteria</taxon>
        <taxon>Pasteurellales</taxon>
        <taxon>Pasteurellaceae</taxon>
        <taxon>Haemophilus</taxon>
    </lineage>
</organism>
<name>MUTS_HAEIN</name>
<gene>
    <name type="primary">mutS</name>
    <name type="ordered locus">HI_0707</name>
</gene>
<comment type="function">
    <text evidence="1">This protein is involved in the repair of mismatches in DNA. It is possible that it carries out the mismatch recognition step. This protein has a weak ATPase activity (By similarity).</text>
</comment>
<comment type="similarity">
    <text evidence="3">Belongs to the DNA mismatch repair MutS family.</text>
</comment>
<accession>P44834</accession>
<feature type="chain" id="PRO_0000115102" description="DNA mismatch repair protein MutS">
    <location>
        <begin position="1"/>
        <end position="861"/>
    </location>
</feature>
<feature type="binding site" evidence="2">
    <location>
        <begin position="616"/>
        <end position="623"/>
    </location>
    <ligand>
        <name>ATP</name>
        <dbReference type="ChEBI" id="CHEBI:30616"/>
    </ligand>
</feature>
<keyword id="KW-0067">ATP-binding</keyword>
<keyword id="KW-0227">DNA damage</keyword>
<keyword id="KW-0234">DNA repair</keyword>
<keyword id="KW-0238">DNA-binding</keyword>
<keyword id="KW-0547">Nucleotide-binding</keyword>
<keyword id="KW-1185">Reference proteome</keyword>
<dbReference type="EMBL" id="L42023">
    <property type="protein sequence ID" value="AAC22364.1"/>
    <property type="molecule type" value="Genomic_DNA"/>
</dbReference>
<dbReference type="EMBL" id="AF003252">
    <property type="protein sequence ID" value="AAB96581.1"/>
    <property type="molecule type" value="Genomic_DNA"/>
</dbReference>
<dbReference type="PIR" id="G64087">
    <property type="entry name" value="G64087"/>
</dbReference>
<dbReference type="RefSeq" id="NP_438865.1">
    <property type="nucleotide sequence ID" value="NC_000907.1"/>
</dbReference>
<dbReference type="SMR" id="P44834"/>
<dbReference type="STRING" id="71421.HI_0707"/>
<dbReference type="EnsemblBacteria" id="AAC22364">
    <property type="protein sequence ID" value="AAC22364"/>
    <property type="gene ID" value="HI_0707"/>
</dbReference>
<dbReference type="KEGG" id="hin:HI_0707"/>
<dbReference type="PATRIC" id="fig|71421.8.peg.737"/>
<dbReference type="eggNOG" id="COG0249">
    <property type="taxonomic scope" value="Bacteria"/>
</dbReference>
<dbReference type="HOGENOM" id="CLU_002472_4_0_6"/>
<dbReference type="OrthoDB" id="9802448at2"/>
<dbReference type="PhylomeDB" id="P44834"/>
<dbReference type="BioCyc" id="HINF71421:G1GJ1-740-MONOMER"/>
<dbReference type="Proteomes" id="UP000000579">
    <property type="component" value="Chromosome"/>
</dbReference>
<dbReference type="GO" id="GO:0005829">
    <property type="term" value="C:cytosol"/>
    <property type="evidence" value="ECO:0000318"/>
    <property type="project" value="GO_Central"/>
</dbReference>
<dbReference type="GO" id="GO:0005524">
    <property type="term" value="F:ATP binding"/>
    <property type="evidence" value="ECO:0007669"/>
    <property type="project" value="UniProtKB-UniRule"/>
</dbReference>
<dbReference type="GO" id="GO:0140664">
    <property type="term" value="F:ATP-dependent DNA damage sensor activity"/>
    <property type="evidence" value="ECO:0007669"/>
    <property type="project" value="InterPro"/>
</dbReference>
<dbReference type="GO" id="GO:0003684">
    <property type="term" value="F:damaged DNA binding"/>
    <property type="evidence" value="ECO:0007669"/>
    <property type="project" value="UniProtKB-UniRule"/>
</dbReference>
<dbReference type="GO" id="GO:0030983">
    <property type="term" value="F:mismatched DNA binding"/>
    <property type="evidence" value="ECO:0000318"/>
    <property type="project" value="GO_Central"/>
</dbReference>
<dbReference type="GO" id="GO:0006298">
    <property type="term" value="P:mismatch repair"/>
    <property type="evidence" value="ECO:0000318"/>
    <property type="project" value="GO_Central"/>
</dbReference>
<dbReference type="CDD" id="cd03284">
    <property type="entry name" value="ABC_MutS1"/>
    <property type="match status" value="1"/>
</dbReference>
<dbReference type="FunFam" id="1.10.1420.10:FF:000002">
    <property type="entry name" value="DNA mismatch repair protein MutS"/>
    <property type="match status" value="1"/>
</dbReference>
<dbReference type="FunFam" id="3.30.420.110:FF:000001">
    <property type="entry name" value="DNA mismatch repair protein MutS"/>
    <property type="match status" value="1"/>
</dbReference>
<dbReference type="FunFam" id="3.40.1170.10:FF:000001">
    <property type="entry name" value="DNA mismatch repair protein MutS"/>
    <property type="match status" value="1"/>
</dbReference>
<dbReference type="FunFam" id="3.40.50.300:FF:000283">
    <property type="entry name" value="DNA mismatch repair protein MutS"/>
    <property type="match status" value="1"/>
</dbReference>
<dbReference type="Gene3D" id="1.10.1420.10">
    <property type="match status" value="2"/>
</dbReference>
<dbReference type="Gene3D" id="6.10.140.430">
    <property type="match status" value="1"/>
</dbReference>
<dbReference type="Gene3D" id="3.40.1170.10">
    <property type="entry name" value="DNA repair protein MutS, domain I"/>
    <property type="match status" value="1"/>
</dbReference>
<dbReference type="Gene3D" id="3.30.420.110">
    <property type="entry name" value="MutS, connector domain"/>
    <property type="match status" value="1"/>
</dbReference>
<dbReference type="Gene3D" id="3.40.50.300">
    <property type="entry name" value="P-loop containing nucleotide triphosphate hydrolases"/>
    <property type="match status" value="1"/>
</dbReference>
<dbReference type="HAMAP" id="MF_00096">
    <property type="entry name" value="MutS"/>
    <property type="match status" value="1"/>
</dbReference>
<dbReference type="InterPro" id="IPR005748">
    <property type="entry name" value="DNA_mismatch_repair_MutS"/>
</dbReference>
<dbReference type="InterPro" id="IPR007695">
    <property type="entry name" value="DNA_mismatch_repair_MutS-lik_N"/>
</dbReference>
<dbReference type="InterPro" id="IPR017261">
    <property type="entry name" value="DNA_mismatch_repair_MutS/MSH"/>
</dbReference>
<dbReference type="InterPro" id="IPR000432">
    <property type="entry name" value="DNA_mismatch_repair_MutS_C"/>
</dbReference>
<dbReference type="InterPro" id="IPR007861">
    <property type="entry name" value="DNA_mismatch_repair_MutS_clamp"/>
</dbReference>
<dbReference type="InterPro" id="IPR007696">
    <property type="entry name" value="DNA_mismatch_repair_MutS_core"/>
</dbReference>
<dbReference type="InterPro" id="IPR016151">
    <property type="entry name" value="DNA_mismatch_repair_MutS_N"/>
</dbReference>
<dbReference type="InterPro" id="IPR036187">
    <property type="entry name" value="DNA_mismatch_repair_MutS_sf"/>
</dbReference>
<dbReference type="InterPro" id="IPR007860">
    <property type="entry name" value="DNA_mmatch_repair_MutS_con_dom"/>
</dbReference>
<dbReference type="InterPro" id="IPR045076">
    <property type="entry name" value="MutS"/>
</dbReference>
<dbReference type="InterPro" id="IPR036678">
    <property type="entry name" value="MutS_con_dom_sf"/>
</dbReference>
<dbReference type="InterPro" id="IPR027417">
    <property type="entry name" value="P-loop_NTPase"/>
</dbReference>
<dbReference type="NCBIfam" id="TIGR01070">
    <property type="entry name" value="mutS1"/>
    <property type="match status" value="1"/>
</dbReference>
<dbReference type="NCBIfam" id="NF003810">
    <property type="entry name" value="PRK05399.1"/>
    <property type="match status" value="1"/>
</dbReference>
<dbReference type="PANTHER" id="PTHR11361:SF34">
    <property type="entry name" value="DNA MISMATCH REPAIR PROTEIN MSH1, MITOCHONDRIAL"/>
    <property type="match status" value="1"/>
</dbReference>
<dbReference type="PANTHER" id="PTHR11361">
    <property type="entry name" value="DNA MISMATCH REPAIR PROTEIN MUTS FAMILY MEMBER"/>
    <property type="match status" value="1"/>
</dbReference>
<dbReference type="Pfam" id="PF01624">
    <property type="entry name" value="MutS_I"/>
    <property type="match status" value="1"/>
</dbReference>
<dbReference type="Pfam" id="PF05188">
    <property type="entry name" value="MutS_II"/>
    <property type="match status" value="1"/>
</dbReference>
<dbReference type="Pfam" id="PF05192">
    <property type="entry name" value="MutS_III"/>
    <property type="match status" value="1"/>
</dbReference>
<dbReference type="Pfam" id="PF05190">
    <property type="entry name" value="MutS_IV"/>
    <property type="match status" value="1"/>
</dbReference>
<dbReference type="Pfam" id="PF00488">
    <property type="entry name" value="MutS_V"/>
    <property type="match status" value="1"/>
</dbReference>
<dbReference type="PIRSF" id="PIRSF037677">
    <property type="entry name" value="DNA_mis_repair_Msh6"/>
    <property type="match status" value="1"/>
</dbReference>
<dbReference type="SMART" id="SM00534">
    <property type="entry name" value="MUTSac"/>
    <property type="match status" value="1"/>
</dbReference>
<dbReference type="SMART" id="SM00533">
    <property type="entry name" value="MUTSd"/>
    <property type="match status" value="1"/>
</dbReference>
<dbReference type="SUPFAM" id="SSF55271">
    <property type="entry name" value="DNA repair protein MutS, domain I"/>
    <property type="match status" value="1"/>
</dbReference>
<dbReference type="SUPFAM" id="SSF53150">
    <property type="entry name" value="DNA repair protein MutS, domain II"/>
    <property type="match status" value="1"/>
</dbReference>
<dbReference type="SUPFAM" id="SSF48334">
    <property type="entry name" value="DNA repair protein MutS, domain III"/>
    <property type="match status" value="1"/>
</dbReference>
<dbReference type="SUPFAM" id="SSF52540">
    <property type="entry name" value="P-loop containing nucleoside triphosphate hydrolases"/>
    <property type="match status" value="1"/>
</dbReference>
<dbReference type="PROSITE" id="PS00486">
    <property type="entry name" value="DNA_MISMATCH_REPAIR_2"/>
    <property type="match status" value="1"/>
</dbReference>
<sequence>MISEENFQQHTPMMQQYLKLKAENPDILLFYRMGDFYELFYDDAKKAAALLDISLTKRGQSAGQPIPMAGMPYHAVEGYLAKLVQLGESVAICEQIGDPTTSKGPVERQIVRIVTPGTVSDEALLPERQDNLIAAVYQEKEKFGLATLDMTSGRFQLCEPADKETLRAELQRIAPVELLYCEEFNEMAAIEHCKGLRRRPIWEFELSTAITLLNRQFGTKDLRAFGVEKSPLGLSAAGCLLQYAKETQRTALPHIQSISLIQNQDCIQLDAATRRNLELTQNLAGGTENTLASVLDKCVTPMGSRLLKRWIHQPVRDVEKLKQRQQSIAEILNFDLVDELQPYLQLVGDMERILARVALRSARPRDLTRLRTALEQIPALRAIVQQKTPPFLTALFSQIADFSEQCDLLQRALIETPPLLIRDGGVIAEGYNAELDEWRMLSDGATQYLENLEKRERESTGIDTLKIGFNAVHGYYIQISQGQAHKAPIHYVRRQTLKNAERYIIPELKEYEDKVLKSKGAALALEKQLYDELFDLLLPHLGSLQLASLALSELDVLVNLAERADTLNYVMPTFCDEVSVKIKNGRHPVVEQVLKDPFIANPVELNHNRHLLVITGPNMGGKSTYMRQTALITLLAYIGSFVPADSARIGPIDRIFTRIGASDDLASGRSTFMVEMTEMANILHQATAQSLVLIDEIGRGTSTYDGLSLAWACAEWLSKKIRSLTLFATHYFELTALPEQLEGIANIHLDALEHNNTIAFMHAVQNGAASKSYGLAVAALAGVPQSVIKLAKQKLTQLEKNSSYSAEQQIQALREANHNQGELFFEQETDALREAIEKLDPDDLSPKQALAYLYQLKKMVG</sequence>